<reference key="1">
    <citation type="submission" date="2006-03" db="EMBL/GenBank/DDBJ databases">
        <title>Complete sequence of Methylobacillus flagellatus KT.</title>
        <authorList>
            <consortium name="US DOE Joint Genome Institute"/>
            <person name="Copeland A."/>
            <person name="Lucas S."/>
            <person name="Lapidus A."/>
            <person name="Barry K."/>
            <person name="Detter J.C."/>
            <person name="Glavina del Rio T."/>
            <person name="Hammon N."/>
            <person name="Israni S."/>
            <person name="Dalin E."/>
            <person name="Tice H."/>
            <person name="Pitluck S."/>
            <person name="Brettin T."/>
            <person name="Bruce D."/>
            <person name="Han C."/>
            <person name="Tapia R."/>
            <person name="Saunders E."/>
            <person name="Gilna P."/>
            <person name="Schmutz J."/>
            <person name="Larimer F."/>
            <person name="Land M."/>
            <person name="Kyrpides N."/>
            <person name="Anderson I."/>
            <person name="Richardson P."/>
        </authorList>
    </citation>
    <scope>NUCLEOTIDE SEQUENCE [LARGE SCALE GENOMIC DNA]</scope>
    <source>
        <strain>ATCC 51484 / DSM 6875 / VKM B-1610 / KT</strain>
    </source>
</reference>
<protein>
    <recommendedName>
        <fullName evidence="1">4-hydroxybenzoate octaprenyltransferase</fullName>
        <ecNumber evidence="1">2.5.1.39</ecNumber>
    </recommendedName>
    <alternativeName>
        <fullName evidence="1">4-HB polyprenyltransferase</fullName>
    </alternativeName>
</protein>
<sequence length="296" mass="32918">MKNPSLRQKLEAYYRLTRLDKPIGILLLLWPTLWGIWLASPGWPDGLVLFVFIAGTVLMRSAGCVMNDLADRNFDGHVERTRQRPLVTGDVTTKEAVLLALALSLVAFILVLQLNPLVVALSFPALFLAASYPLTKRFLSIPQAYLGIAFGFGIPMAFAAITGQLPLEAWILLLANVFWAIAYDTEYAMVDRNDDLNIGIRSSAIFFGRLDVFAVMACYGAFLILMAWVGVRLQQSWPYFAGLGVAALVALYHYALIRDRDRQSCFKAFLHNNWLGAAIFVGVLASDYFRSSILSI</sequence>
<evidence type="ECO:0000255" key="1">
    <source>
        <dbReference type="HAMAP-Rule" id="MF_01635"/>
    </source>
</evidence>
<keyword id="KW-0997">Cell inner membrane</keyword>
<keyword id="KW-1003">Cell membrane</keyword>
<keyword id="KW-0460">Magnesium</keyword>
<keyword id="KW-0472">Membrane</keyword>
<keyword id="KW-1185">Reference proteome</keyword>
<keyword id="KW-0808">Transferase</keyword>
<keyword id="KW-0812">Transmembrane</keyword>
<keyword id="KW-1133">Transmembrane helix</keyword>
<keyword id="KW-0831">Ubiquinone biosynthesis</keyword>
<proteinExistence type="inferred from homology"/>
<accession>Q1GXB3</accession>
<feature type="chain" id="PRO_0000262806" description="4-hydroxybenzoate octaprenyltransferase">
    <location>
        <begin position="1"/>
        <end position="296"/>
    </location>
</feature>
<feature type="transmembrane region" description="Helical" evidence="1">
    <location>
        <begin position="23"/>
        <end position="43"/>
    </location>
</feature>
<feature type="transmembrane region" description="Helical" evidence="1">
    <location>
        <begin position="46"/>
        <end position="66"/>
    </location>
</feature>
<feature type="transmembrane region" description="Helical" evidence="1">
    <location>
        <begin position="99"/>
        <end position="119"/>
    </location>
</feature>
<feature type="transmembrane region" description="Helical" evidence="1">
    <location>
        <begin position="141"/>
        <end position="161"/>
    </location>
</feature>
<feature type="transmembrane region" description="Helical" evidence="1">
    <location>
        <begin position="163"/>
        <end position="183"/>
    </location>
</feature>
<feature type="transmembrane region" description="Helical" evidence="1">
    <location>
        <begin position="211"/>
        <end position="231"/>
    </location>
</feature>
<feature type="transmembrane region" description="Helical" evidence="1">
    <location>
        <begin position="237"/>
        <end position="257"/>
    </location>
</feature>
<feature type="transmembrane region" description="Helical" evidence="1">
    <location>
        <begin position="265"/>
        <end position="285"/>
    </location>
</feature>
<name>UBIA_METFK</name>
<dbReference type="EC" id="2.5.1.39" evidence="1"/>
<dbReference type="EMBL" id="CP000284">
    <property type="protein sequence ID" value="ABE48325.1"/>
    <property type="molecule type" value="Genomic_DNA"/>
</dbReference>
<dbReference type="RefSeq" id="WP_011478422.1">
    <property type="nucleotide sequence ID" value="NC_007947.1"/>
</dbReference>
<dbReference type="SMR" id="Q1GXB3"/>
<dbReference type="STRING" id="265072.Mfla_0054"/>
<dbReference type="KEGG" id="mfa:Mfla_0054"/>
<dbReference type="eggNOG" id="COG0382">
    <property type="taxonomic scope" value="Bacteria"/>
</dbReference>
<dbReference type="HOGENOM" id="CLU_034879_1_0_4"/>
<dbReference type="OrthoDB" id="9782418at2"/>
<dbReference type="UniPathway" id="UPA00232"/>
<dbReference type="Proteomes" id="UP000002440">
    <property type="component" value="Chromosome"/>
</dbReference>
<dbReference type="GO" id="GO:0005886">
    <property type="term" value="C:plasma membrane"/>
    <property type="evidence" value="ECO:0007669"/>
    <property type="project" value="UniProtKB-SubCell"/>
</dbReference>
<dbReference type="GO" id="GO:0008412">
    <property type="term" value="F:4-hydroxybenzoate polyprenyltransferase activity"/>
    <property type="evidence" value="ECO:0007669"/>
    <property type="project" value="UniProtKB-UniRule"/>
</dbReference>
<dbReference type="GO" id="GO:0006744">
    <property type="term" value="P:ubiquinone biosynthetic process"/>
    <property type="evidence" value="ECO:0007669"/>
    <property type="project" value="UniProtKB-UniRule"/>
</dbReference>
<dbReference type="CDD" id="cd13959">
    <property type="entry name" value="PT_UbiA_COQ2"/>
    <property type="match status" value="1"/>
</dbReference>
<dbReference type="FunFam" id="1.10.357.140:FF:000002">
    <property type="entry name" value="4-hydroxybenzoate octaprenyltransferase"/>
    <property type="match status" value="1"/>
</dbReference>
<dbReference type="FunFam" id="1.20.120.1780:FF:000001">
    <property type="entry name" value="4-hydroxybenzoate octaprenyltransferase"/>
    <property type="match status" value="1"/>
</dbReference>
<dbReference type="Gene3D" id="1.10.357.140">
    <property type="entry name" value="UbiA prenyltransferase"/>
    <property type="match status" value="1"/>
</dbReference>
<dbReference type="Gene3D" id="1.20.120.1780">
    <property type="entry name" value="UbiA prenyltransferase"/>
    <property type="match status" value="1"/>
</dbReference>
<dbReference type="HAMAP" id="MF_01635">
    <property type="entry name" value="UbiA"/>
    <property type="match status" value="1"/>
</dbReference>
<dbReference type="InterPro" id="IPR006370">
    <property type="entry name" value="HB_polyprenyltransferase-like"/>
</dbReference>
<dbReference type="InterPro" id="IPR039653">
    <property type="entry name" value="Prenyltransferase"/>
</dbReference>
<dbReference type="InterPro" id="IPR000537">
    <property type="entry name" value="UbiA_prenyltransferase"/>
</dbReference>
<dbReference type="InterPro" id="IPR030470">
    <property type="entry name" value="UbiA_prenylTrfase_CS"/>
</dbReference>
<dbReference type="InterPro" id="IPR044878">
    <property type="entry name" value="UbiA_sf"/>
</dbReference>
<dbReference type="NCBIfam" id="TIGR01474">
    <property type="entry name" value="ubiA_proteo"/>
    <property type="match status" value="1"/>
</dbReference>
<dbReference type="PANTHER" id="PTHR11048:SF28">
    <property type="entry name" value="4-HYDROXYBENZOATE POLYPRENYLTRANSFERASE, MITOCHONDRIAL"/>
    <property type="match status" value="1"/>
</dbReference>
<dbReference type="PANTHER" id="PTHR11048">
    <property type="entry name" value="PRENYLTRANSFERASES"/>
    <property type="match status" value="1"/>
</dbReference>
<dbReference type="Pfam" id="PF01040">
    <property type="entry name" value="UbiA"/>
    <property type="match status" value="1"/>
</dbReference>
<dbReference type="PROSITE" id="PS00943">
    <property type="entry name" value="UBIA"/>
    <property type="match status" value="1"/>
</dbReference>
<comment type="function">
    <text evidence="1">Catalyzes the prenylation of para-hydroxybenzoate (PHB) with an all-trans polyprenyl group. Mediates the second step in the final reaction sequence of ubiquinone-8 (UQ-8) biosynthesis, which is the condensation of the polyisoprenoid side chain with PHB, generating the first membrane-bound Q intermediate 3-octaprenyl-4-hydroxybenzoate.</text>
</comment>
<comment type="catalytic activity">
    <reaction evidence="1">
        <text>all-trans-octaprenyl diphosphate + 4-hydroxybenzoate = 4-hydroxy-3-(all-trans-octaprenyl)benzoate + diphosphate</text>
        <dbReference type="Rhea" id="RHEA:27782"/>
        <dbReference type="ChEBI" id="CHEBI:1617"/>
        <dbReference type="ChEBI" id="CHEBI:17879"/>
        <dbReference type="ChEBI" id="CHEBI:33019"/>
        <dbReference type="ChEBI" id="CHEBI:57711"/>
        <dbReference type="EC" id="2.5.1.39"/>
    </reaction>
</comment>
<comment type="cofactor">
    <cofactor evidence="1">
        <name>Mg(2+)</name>
        <dbReference type="ChEBI" id="CHEBI:18420"/>
    </cofactor>
</comment>
<comment type="pathway">
    <text evidence="1">Cofactor biosynthesis; ubiquinone biosynthesis.</text>
</comment>
<comment type="subcellular location">
    <subcellularLocation>
        <location evidence="1">Cell inner membrane</location>
        <topology evidence="1">Multi-pass membrane protein</topology>
    </subcellularLocation>
</comment>
<comment type="similarity">
    <text evidence="1">Belongs to the UbiA prenyltransferase family.</text>
</comment>
<gene>
    <name evidence="1" type="primary">ubiA</name>
    <name type="ordered locus">Mfla_0054</name>
</gene>
<organism>
    <name type="scientific">Methylobacillus flagellatus (strain ATCC 51484 / DSM 6875 / VKM B-1610 / KT)</name>
    <dbReference type="NCBI Taxonomy" id="265072"/>
    <lineage>
        <taxon>Bacteria</taxon>
        <taxon>Pseudomonadati</taxon>
        <taxon>Pseudomonadota</taxon>
        <taxon>Betaproteobacteria</taxon>
        <taxon>Nitrosomonadales</taxon>
        <taxon>Methylophilaceae</taxon>
        <taxon>Methylobacillus</taxon>
    </lineage>
</organism>